<feature type="chain" id="PRO_1000015017" description="Small ribosomal subunit protein uS10">
    <location>
        <begin position="1"/>
        <end position="105"/>
    </location>
</feature>
<accession>A1VEB7</accession>
<evidence type="ECO:0000255" key="1">
    <source>
        <dbReference type="HAMAP-Rule" id="MF_00508"/>
    </source>
</evidence>
<evidence type="ECO:0000305" key="2"/>
<proteinExistence type="inferred from homology"/>
<name>RS10_NITV4</name>
<keyword id="KW-0687">Ribonucleoprotein</keyword>
<keyword id="KW-0689">Ribosomal protein</keyword>
<gene>
    <name evidence="1" type="primary">rpsJ</name>
    <name type="ordered locus">Dvul_1766</name>
</gene>
<organism>
    <name type="scientific">Nitratidesulfovibrio vulgaris (strain DP4)</name>
    <name type="common">Desulfovibrio vulgaris</name>
    <dbReference type="NCBI Taxonomy" id="391774"/>
    <lineage>
        <taxon>Bacteria</taxon>
        <taxon>Pseudomonadati</taxon>
        <taxon>Thermodesulfobacteriota</taxon>
        <taxon>Desulfovibrionia</taxon>
        <taxon>Desulfovibrionales</taxon>
        <taxon>Desulfovibrionaceae</taxon>
        <taxon>Nitratidesulfovibrio</taxon>
    </lineage>
</organism>
<dbReference type="EMBL" id="CP000527">
    <property type="protein sequence ID" value="ABM28783.1"/>
    <property type="molecule type" value="Genomic_DNA"/>
</dbReference>
<dbReference type="RefSeq" id="WP_010938597.1">
    <property type="nucleotide sequence ID" value="NC_008751.1"/>
</dbReference>
<dbReference type="SMR" id="A1VEB7"/>
<dbReference type="KEGG" id="dvl:Dvul_1766"/>
<dbReference type="HOGENOM" id="CLU_122625_1_3_7"/>
<dbReference type="Proteomes" id="UP000009173">
    <property type="component" value="Chromosome"/>
</dbReference>
<dbReference type="GO" id="GO:1990904">
    <property type="term" value="C:ribonucleoprotein complex"/>
    <property type="evidence" value="ECO:0007669"/>
    <property type="project" value="UniProtKB-KW"/>
</dbReference>
<dbReference type="GO" id="GO:0005840">
    <property type="term" value="C:ribosome"/>
    <property type="evidence" value="ECO:0007669"/>
    <property type="project" value="UniProtKB-KW"/>
</dbReference>
<dbReference type="GO" id="GO:0003735">
    <property type="term" value="F:structural constituent of ribosome"/>
    <property type="evidence" value="ECO:0007669"/>
    <property type="project" value="InterPro"/>
</dbReference>
<dbReference type="GO" id="GO:0000049">
    <property type="term" value="F:tRNA binding"/>
    <property type="evidence" value="ECO:0007669"/>
    <property type="project" value="UniProtKB-UniRule"/>
</dbReference>
<dbReference type="GO" id="GO:0006412">
    <property type="term" value="P:translation"/>
    <property type="evidence" value="ECO:0007669"/>
    <property type="project" value="UniProtKB-UniRule"/>
</dbReference>
<dbReference type="FunFam" id="3.30.70.600:FF:000003">
    <property type="entry name" value="30S ribosomal protein S10"/>
    <property type="match status" value="1"/>
</dbReference>
<dbReference type="Gene3D" id="3.30.70.600">
    <property type="entry name" value="Ribosomal protein S10 domain"/>
    <property type="match status" value="1"/>
</dbReference>
<dbReference type="HAMAP" id="MF_00508">
    <property type="entry name" value="Ribosomal_uS10"/>
    <property type="match status" value="1"/>
</dbReference>
<dbReference type="InterPro" id="IPR001848">
    <property type="entry name" value="Ribosomal_uS10"/>
</dbReference>
<dbReference type="InterPro" id="IPR018268">
    <property type="entry name" value="Ribosomal_uS10_CS"/>
</dbReference>
<dbReference type="InterPro" id="IPR027486">
    <property type="entry name" value="Ribosomal_uS10_dom"/>
</dbReference>
<dbReference type="InterPro" id="IPR036838">
    <property type="entry name" value="Ribosomal_uS10_dom_sf"/>
</dbReference>
<dbReference type="NCBIfam" id="NF001861">
    <property type="entry name" value="PRK00596.1"/>
    <property type="match status" value="1"/>
</dbReference>
<dbReference type="NCBIfam" id="TIGR01049">
    <property type="entry name" value="rpsJ_bact"/>
    <property type="match status" value="1"/>
</dbReference>
<dbReference type="PANTHER" id="PTHR11700">
    <property type="entry name" value="30S RIBOSOMAL PROTEIN S10 FAMILY MEMBER"/>
    <property type="match status" value="1"/>
</dbReference>
<dbReference type="Pfam" id="PF00338">
    <property type="entry name" value="Ribosomal_S10"/>
    <property type="match status" value="1"/>
</dbReference>
<dbReference type="PRINTS" id="PR00971">
    <property type="entry name" value="RIBOSOMALS10"/>
</dbReference>
<dbReference type="SMART" id="SM01403">
    <property type="entry name" value="Ribosomal_S10"/>
    <property type="match status" value="1"/>
</dbReference>
<dbReference type="SUPFAM" id="SSF54999">
    <property type="entry name" value="Ribosomal protein S10"/>
    <property type="match status" value="1"/>
</dbReference>
<dbReference type="PROSITE" id="PS00361">
    <property type="entry name" value="RIBOSOMAL_S10"/>
    <property type="match status" value="1"/>
</dbReference>
<comment type="function">
    <text evidence="1">Involved in the binding of tRNA to the ribosomes.</text>
</comment>
<comment type="subunit">
    <text evidence="1">Part of the 30S ribosomal subunit.</text>
</comment>
<comment type="similarity">
    <text evidence="1">Belongs to the universal ribosomal protein uS10 family.</text>
</comment>
<sequence>MTTVSSDRIRIKLKAYDYRILDKAVAEIVDTARNTGAGVAGPIPLPTNIHKFTVNRSVHVDKKSREQFEMRIHKRLMDILEPTQQTVDALGKLSLPAGVDVEIKL</sequence>
<reference key="1">
    <citation type="journal article" date="2009" name="Environ. Microbiol.">
        <title>Contribution of mobile genetic elements to Desulfovibrio vulgaris genome plasticity.</title>
        <authorList>
            <person name="Walker C.B."/>
            <person name="Stolyar S."/>
            <person name="Chivian D."/>
            <person name="Pinel N."/>
            <person name="Gabster J.A."/>
            <person name="Dehal P.S."/>
            <person name="He Z."/>
            <person name="Yang Z.K."/>
            <person name="Yen H.C."/>
            <person name="Zhou J."/>
            <person name="Wall J.D."/>
            <person name="Hazen T.C."/>
            <person name="Arkin A.P."/>
            <person name="Stahl D.A."/>
        </authorList>
    </citation>
    <scope>NUCLEOTIDE SEQUENCE [LARGE SCALE GENOMIC DNA]</scope>
    <source>
        <strain>DP4</strain>
    </source>
</reference>
<protein>
    <recommendedName>
        <fullName evidence="1">Small ribosomal subunit protein uS10</fullName>
    </recommendedName>
    <alternativeName>
        <fullName evidence="2">30S ribosomal protein S10</fullName>
    </alternativeName>
</protein>